<comment type="function">
    <text evidence="1">Catalyzes the reversible oxidation of malate to oxaloacetate.</text>
</comment>
<comment type="catalytic activity">
    <reaction evidence="1">
        <text>(S)-malate + NAD(+) = oxaloacetate + NADH + H(+)</text>
        <dbReference type="Rhea" id="RHEA:21432"/>
        <dbReference type="ChEBI" id="CHEBI:15378"/>
        <dbReference type="ChEBI" id="CHEBI:15589"/>
        <dbReference type="ChEBI" id="CHEBI:16452"/>
        <dbReference type="ChEBI" id="CHEBI:57540"/>
        <dbReference type="ChEBI" id="CHEBI:57945"/>
        <dbReference type="EC" id="1.1.1.37"/>
    </reaction>
</comment>
<comment type="similarity">
    <text evidence="1">Belongs to the LDH/MDH superfamily. MDH type 3 family.</text>
</comment>
<evidence type="ECO:0000255" key="1">
    <source>
        <dbReference type="HAMAP-Rule" id="MF_00487"/>
    </source>
</evidence>
<protein>
    <recommendedName>
        <fullName evidence="1">Malate dehydrogenase</fullName>
        <ecNumber evidence="1">1.1.1.37</ecNumber>
    </recommendedName>
</protein>
<reference key="1">
    <citation type="submission" date="2008-01" db="EMBL/GenBank/DDBJ databases">
        <title>Complete sequence of Pseudomonas putida GB-1.</title>
        <authorList>
            <consortium name="US DOE Joint Genome Institute"/>
            <person name="Copeland A."/>
            <person name="Lucas S."/>
            <person name="Lapidus A."/>
            <person name="Barry K."/>
            <person name="Glavina del Rio T."/>
            <person name="Dalin E."/>
            <person name="Tice H."/>
            <person name="Pitluck S."/>
            <person name="Bruce D."/>
            <person name="Goodwin L."/>
            <person name="Chertkov O."/>
            <person name="Brettin T."/>
            <person name="Detter J.C."/>
            <person name="Han C."/>
            <person name="Kuske C.R."/>
            <person name="Schmutz J."/>
            <person name="Larimer F."/>
            <person name="Land M."/>
            <person name="Hauser L."/>
            <person name="Kyrpides N."/>
            <person name="Kim E."/>
            <person name="McCarthy J.K."/>
            <person name="Richardson P."/>
        </authorList>
    </citation>
    <scope>NUCLEOTIDE SEQUENCE [LARGE SCALE GENOMIC DNA]</scope>
    <source>
        <strain>GB-1</strain>
    </source>
</reference>
<gene>
    <name evidence="1" type="primary">mdh</name>
    <name type="ordered locus">PputGB1_0697</name>
</gene>
<feature type="chain" id="PRO_1000191653" description="Malate dehydrogenase">
    <location>
        <begin position="1"/>
        <end position="309"/>
    </location>
</feature>
<feature type="active site" description="Proton acceptor" evidence="1">
    <location>
        <position position="175"/>
    </location>
</feature>
<feature type="binding site" evidence="1">
    <location>
        <begin position="8"/>
        <end position="13"/>
    </location>
    <ligand>
        <name>NAD(+)</name>
        <dbReference type="ChEBI" id="CHEBI:57540"/>
    </ligand>
</feature>
<feature type="binding site" evidence="1">
    <location>
        <position position="33"/>
    </location>
    <ligand>
        <name>NAD(+)</name>
        <dbReference type="ChEBI" id="CHEBI:57540"/>
    </ligand>
</feature>
<feature type="binding site" evidence="1">
    <location>
        <position position="82"/>
    </location>
    <ligand>
        <name>substrate</name>
    </ligand>
</feature>
<feature type="binding site" evidence="1">
    <location>
        <position position="88"/>
    </location>
    <ligand>
        <name>substrate</name>
    </ligand>
</feature>
<feature type="binding site" evidence="1">
    <location>
        <position position="95"/>
    </location>
    <ligand>
        <name>NAD(+)</name>
        <dbReference type="ChEBI" id="CHEBI:57540"/>
    </ligand>
</feature>
<feature type="binding site" evidence="1">
    <location>
        <begin position="118"/>
        <end position="120"/>
    </location>
    <ligand>
        <name>NAD(+)</name>
        <dbReference type="ChEBI" id="CHEBI:57540"/>
    </ligand>
</feature>
<feature type="binding site" evidence="1">
    <location>
        <position position="120"/>
    </location>
    <ligand>
        <name>substrate</name>
    </ligand>
</feature>
<feature type="binding site" evidence="1">
    <location>
        <position position="151"/>
    </location>
    <ligand>
        <name>substrate</name>
    </ligand>
</feature>
<sequence>MNKLTIVGAGLVGEAAAQIIARDELCRELVLMDVQGELAQGKALDVWQAAVESGSDTRVYGGAKAEMLDGSDLVVITAGVPRKPGQSRQDVLSINLPILDGIMTDIKHHAPAATVLVVSNPVDVLTYRAWSVSGLGRDKVFGQAGVLDTARMKCFIAEQTGFSAKDITALVLGGHGDSMVPLMRYCQIGSVPLSHFLSSEQIEQIVERTRKGGGEILGLKKMGSACDAPGVAIAQMVDAIANGRNRILPAVAILQGEYGRKDIAMGVPCVLADEGLARVIELPLDAQEQAMFDQSADQVARDIDEMKAL</sequence>
<accession>B0KMD1</accession>
<organism>
    <name type="scientific">Pseudomonas putida (strain GB-1)</name>
    <dbReference type="NCBI Taxonomy" id="76869"/>
    <lineage>
        <taxon>Bacteria</taxon>
        <taxon>Pseudomonadati</taxon>
        <taxon>Pseudomonadota</taxon>
        <taxon>Gammaproteobacteria</taxon>
        <taxon>Pseudomonadales</taxon>
        <taxon>Pseudomonadaceae</taxon>
        <taxon>Pseudomonas</taxon>
    </lineage>
</organism>
<dbReference type="EC" id="1.1.1.37" evidence="1"/>
<dbReference type="EMBL" id="CP000926">
    <property type="protein sequence ID" value="ABY96607.1"/>
    <property type="molecule type" value="Genomic_DNA"/>
</dbReference>
<dbReference type="RefSeq" id="WP_012270412.1">
    <property type="nucleotide sequence ID" value="NC_010322.1"/>
</dbReference>
<dbReference type="SMR" id="B0KMD1"/>
<dbReference type="KEGG" id="ppg:PputGB1_0697"/>
<dbReference type="eggNOG" id="COG0039">
    <property type="taxonomic scope" value="Bacteria"/>
</dbReference>
<dbReference type="HOGENOM" id="CLU_045401_2_1_6"/>
<dbReference type="Proteomes" id="UP000002157">
    <property type="component" value="Chromosome"/>
</dbReference>
<dbReference type="GO" id="GO:0004459">
    <property type="term" value="F:L-lactate dehydrogenase activity"/>
    <property type="evidence" value="ECO:0007669"/>
    <property type="project" value="TreeGrafter"/>
</dbReference>
<dbReference type="GO" id="GO:0030060">
    <property type="term" value="F:L-malate dehydrogenase (NAD+) activity"/>
    <property type="evidence" value="ECO:0007669"/>
    <property type="project" value="UniProtKB-UniRule"/>
</dbReference>
<dbReference type="GO" id="GO:0006089">
    <property type="term" value="P:lactate metabolic process"/>
    <property type="evidence" value="ECO:0007669"/>
    <property type="project" value="TreeGrafter"/>
</dbReference>
<dbReference type="GO" id="GO:0006099">
    <property type="term" value="P:tricarboxylic acid cycle"/>
    <property type="evidence" value="ECO:0007669"/>
    <property type="project" value="UniProtKB-UniRule"/>
</dbReference>
<dbReference type="CDD" id="cd01339">
    <property type="entry name" value="LDH-like_MDH"/>
    <property type="match status" value="1"/>
</dbReference>
<dbReference type="Gene3D" id="3.90.110.10">
    <property type="entry name" value="Lactate dehydrogenase/glycoside hydrolase, family 4, C-terminal"/>
    <property type="match status" value="1"/>
</dbReference>
<dbReference type="Gene3D" id="3.40.50.720">
    <property type="entry name" value="NAD(P)-binding Rossmann-like Domain"/>
    <property type="match status" value="1"/>
</dbReference>
<dbReference type="HAMAP" id="MF_00487">
    <property type="entry name" value="Malate_dehydrog_3"/>
    <property type="match status" value="1"/>
</dbReference>
<dbReference type="InterPro" id="IPR001557">
    <property type="entry name" value="L-lactate/malate_DH"/>
</dbReference>
<dbReference type="InterPro" id="IPR022383">
    <property type="entry name" value="Lactate/malate_DH_C"/>
</dbReference>
<dbReference type="InterPro" id="IPR001236">
    <property type="entry name" value="Lactate/malate_DH_N"/>
</dbReference>
<dbReference type="InterPro" id="IPR015955">
    <property type="entry name" value="Lactate_DH/Glyco_Ohase_4_C"/>
</dbReference>
<dbReference type="InterPro" id="IPR011275">
    <property type="entry name" value="Malate_DH_type3"/>
</dbReference>
<dbReference type="InterPro" id="IPR036291">
    <property type="entry name" value="NAD(P)-bd_dom_sf"/>
</dbReference>
<dbReference type="NCBIfam" id="NF004863">
    <property type="entry name" value="PRK06223.1"/>
    <property type="match status" value="1"/>
</dbReference>
<dbReference type="PANTHER" id="PTHR43128">
    <property type="entry name" value="L-2-HYDROXYCARBOXYLATE DEHYDROGENASE (NAD(P)(+))"/>
    <property type="match status" value="1"/>
</dbReference>
<dbReference type="PANTHER" id="PTHR43128:SF16">
    <property type="entry name" value="L-LACTATE DEHYDROGENASE"/>
    <property type="match status" value="1"/>
</dbReference>
<dbReference type="Pfam" id="PF02866">
    <property type="entry name" value="Ldh_1_C"/>
    <property type="match status" value="1"/>
</dbReference>
<dbReference type="Pfam" id="PF00056">
    <property type="entry name" value="Ldh_1_N"/>
    <property type="match status" value="1"/>
</dbReference>
<dbReference type="PIRSF" id="PIRSF000102">
    <property type="entry name" value="Lac_mal_DH"/>
    <property type="match status" value="1"/>
</dbReference>
<dbReference type="PRINTS" id="PR00086">
    <property type="entry name" value="LLDHDRGNASE"/>
</dbReference>
<dbReference type="SUPFAM" id="SSF56327">
    <property type="entry name" value="LDH C-terminal domain-like"/>
    <property type="match status" value="1"/>
</dbReference>
<dbReference type="SUPFAM" id="SSF51735">
    <property type="entry name" value="NAD(P)-binding Rossmann-fold domains"/>
    <property type="match status" value="1"/>
</dbReference>
<proteinExistence type="inferred from homology"/>
<name>MDH_PSEPG</name>
<keyword id="KW-0520">NAD</keyword>
<keyword id="KW-0560">Oxidoreductase</keyword>
<keyword id="KW-0816">Tricarboxylic acid cycle</keyword>